<reference evidence="5" key="1">
    <citation type="journal article" date="1998" name="Science">
        <title>Genome sequence of the nematode C. elegans: a platform for investigating biology.</title>
        <authorList>
            <consortium name="The C. elegans sequencing consortium"/>
        </authorList>
    </citation>
    <scope>NUCLEOTIDE SEQUENCE [LARGE SCALE GENOMIC DNA]</scope>
    <source>
        <strain evidence="5">Bristol N2</strain>
    </source>
</reference>
<reference evidence="4" key="2">
    <citation type="journal article" date="2014" name="Cell Rep.">
        <title>A histone methylation network regulates transgenerational epigenetic memory in C. elegans.</title>
        <authorList>
            <person name="Greer E.L."/>
            <person name="Beese-Sims S.E."/>
            <person name="Brookes E."/>
            <person name="Spadafora R."/>
            <person name="Zhu Y."/>
            <person name="Rothbart S.B."/>
            <person name="Aristizabal-Corrales D."/>
            <person name="Chen S."/>
            <person name="Badeaux A.I."/>
            <person name="Jin Q."/>
            <person name="Wang W."/>
            <person name="Strahl B.D."/>
            <person name="Colaiacovo M.P."/>
            <person name="Shi Y."/>
        </authorList>
    </citation>
    <scope>FUNCTION</scope>
    <scope>CATALYTIC ACTIVITY</scope>
    <scope>DISRUPTION PHENOTYPE</scope>
    <scope>MUTAGENESIS OF 1-MET--PHE-135</scope>
</reference>
<reference evidence="4" key="3">
    <citation type="journal article" date="2018" name="PLoS Genet.">
        <title>A Caenorhabditis elegans protein with a PRDM9-like SET domain localizes to chromatin-associated foci and promotes spermatocyte gene expression, sperm production and fertility.</title>
        <authorList>
            <person name="Engert C.G."/>
            <person name="Droste R."/>
            <person name="van Oudenaarden A."/>
            <person name="Horvitz H.R."/>
        </authorList>
    </citation>
    <scope>FUNCTION</scope>
    <scope>SUBCELLULAR LOCATION</scope>
    <scope>TISSUE SPECIFICITY</scope>
    <scope>DEVELOPMENTAL STAGE</scope>
    <scope>MUTAGENESIS OF 1-MET--PHE-135 AND 84-TYR--ARG-277</scope>
</reference>
<accession>A0A163UT06</accession>
<accession>A0A168H266</accession>
<name>SET17_CAEEL</name>
<protein>
    <recommendedName>
        <fullName evidence="4">Histone-lysine N-methyltransferase set-17</fullName>
        <ecNumber evidence="2">2.1.1.-</ecNumber>
        <ecNumber evidence="2">2.1.1.364</ecNumber>
    </recommendedName>
    <alternativeName>
        <fullName evidence="6">SET domain-containing protein 17</fullName>
    </alternativeName>
</protein>
<keyword id="KW-0025">Alternative splicing</keyword>
<keyword id="KW-0489">Methyltransferase</keyword>
<keyword id="KW-0539">Nucleus</keyword>
<keyword id="KW-1185">Reference proteome</keyword>
<keyword id="KW-0949">S-adenosyl-L-methionine</keyword>
<keyword id="KW-0808">Transferase</keyword>
<evidence type="ECO:0000255" key="1">
    <source>
        <dbReference type="PROSITE-ProRule" id="PRU00190"/>
    </source>
</evidence>
<evidence type="ECO:0000269" key="2">
    <source>
    </source>
</evidence>
<evidence type="ECO:0000269" key="3">
    <source>
    </source>
</evidence>
<evidence type="ECO:0000305" key="4"/>
<evidence type="ECO:0000312" key="5">
    <source>
        <dbReference type="Proteomes" id="UP000001940"/>
    </source>
</evidence>
<evidence type="ECO:0000312" key="6">
    <source>
        <dbReference type="WormBase" id="T21B10.5a"/>
    </source>
</evidence>
<evidence type="ECO:0000312" key="7">
    <source>
        <dbReference type="WormBase" id="T21B10.5b"/>
    </source>
</evidence>
<organism evidence="5">
    <name type="scientific">Caenorhabditis elegans</name>
    <dbReference type="NCBI Taxonomy" id="6239"/>
    <lineage>
        <taxon>Eukaryota</taxon>
        <taxon>Metazoa</taxon>
        <taxon>Ecdysozoa</taxon>
        <taxon>Nematoda</taxon>
        <taxon>Chromadorea</taxon>
        <taxon>Rhabditida</taxon>
        <taxon>Rhabditina</taxon>
        <taxon>Rhabditomorpha</taxon>
        <taxon>Rhabditoidea</taxon>
        <taxon>Rhabditidae</taxon>
        <taxon>Peloderinae</taxon>
        <taxon>Caenorhabditis</taxon>
    </lineage>
</organism>
<gene>
    <name evidence="6" type="primary">set-17</name>
    <name evidence="6" type="ORF">T21B10.5</name>
</gene>
<proteinExistence type="evidence at protein level"/>
<dbReference type="EC" id="2.1.1.-" evidence="2"/>
<dbReference type="EC" id="2.1.1.364" evidence="2"/>
<dbReference type="EMBL" id="BX284602">
    <property type="protein sequence ID" value="SAP35533.1"/>
    <property type="molecule type" value="Genomic_DNA"/>
</dbReference>
<dbReference type="EMBL" id="BX284602">
    <property type="protein sequence ID" value="SAP35534.1"/>
    <property type="molecule type" value="Genomic_DNA"/>
</dbReference>
<dbReference type="RefSeq" id="NP_001317778.1">
    <molecule id="A0A163UT06-1"/>
    <property type="nucleotide sequence ID" value="NM_001330955.2"/>
</dbReference>
<dbReference type="RefSeq" id="NP_001317779.1">
    <property type="nucleotide sequence ID" value="NM_001330956.1"/>
</dbReference>
<dbReference type="RefSeq" id="NP_001368599.1">
    <molecule id="A0A163UT06-2"/>
    <property type="nucleotide sequence ID" value="NM_001381544.1"/>
</dbReference>
<dbReference type="SMR" id="A0A163UT06"/>
<dbReference type="FunCoup" id="A0A163UT06">
    <property type="interactions" value="23"/>
</dbReference>
<dbReference type="STRING" id="6239.T21B10.5a.1"/>
<dbReference type="PaxDb" id="6239-T21B10.5"/>
<dbReference type="EnsemblMetazoa" id="T21B10.5a.1">
    <molecule id="A0A163UT06-1"/>
    <property type="protein sequence ID" value="T21B10.5a.1"/>
    <property type="gene ID" value="WBGene00011887"/>
</dbReference>
<dbReference type="EnsemblMetazoa" id="T21B10.5b.1">
    <molecule id="A0A163UT06-2"/>
    <property type="protein sequence ID" value="T21B10.5b.1"/>
    <property type="gene ID" value="WBGene00011887"/>
</dbReference>
<dbReference type="GeneID" id="174425"/>
<dbReference type="KEGG" id="cel:CELE_T21B10.5"/>
<dbReference type="AGR" id="WB:WBGene00011887"/>
<dbReference type="CTD" id="174425"/>
<dbReference type="WormBase" id="T21B10.5a">
    <molecule id="A0A163UT06-1"/>
    <property type="protein sequence ID" value="CE51660"/>
    <property type="gene ID" value="WBGene00011887"/>
    <property type="gene designation" value="set-17"/>
</dbReference>
<dbReference type="WormBase" id="T21B10.5b">
    <molecule id="A0A163UT06-2"/>
    <property type="protein sequence ID" value="CE51577"/>
    <property type="gene ID" value="WBGene00011887"/>
    <property type="gene designation" value="set-17"/>
</dbReference>
<dbReference type="eggNOG" id="KOG2461">
    <property type="taxonomic scope" value="Eukaryota"/>
</dbReference>
<dbReference type="GeneTree" id="ENSGT00940000158211"/>
<dbReference type="InParanoid" id="A0A163UT06"/>
<dbReference type="OrthoDB" id="40579at2759"/>
<dbReference type="PRO" id="PR:A0A163UT06"/>
<dbReference type="Proteomes" id="UP000001940">
    <property type="component" value="Chromosome II"/>
</dbReference>
<dbReference type="Bgee" id="WBGene00011887">
    <property type="expression patterns" value="Expressed in adult organism and 8 other cell types or tissues"/>
</dbReference>
<dbReference type="GO" id="GO:0005634">
    <property type="term" value="C:nucleus"/>
    <property type="evidence" value="ECO:0007669"/>
    <property type="project" value="UniProtKB-SubCell"/>
</dbReference>
<dbReference type="GO" id="GO:0042800">
    <property type="term" value="F:histone H3K4 methyltransferase activity"/>
    <property type="evidence" value="ECO:0000314"/>
    <property type="project" value="WormBase"/>
</dbReference>
<dbReference type="GO" id="GO:0140945">
    <property type="term" value="F:histone H3K4 monomethyltransferase activity"/>
    <property type="evidence" value="ECO:0007669"/>
    <property type="project" value="RHEA"/>
</dbReference>
<dbReference type="GO" id="GO:0032259">
    <property type="term" value="P:methylation"/>
    <property type="evidence" value="ECO:0007669"/>
    <property type="project" value="UniProtKB-KW"/>
</dbReference>
<dbReference type="CDD" id="cd19193">
    <property type="entry name" value="PR-SET_PRDM7_9"/>
    <property type="match status" value="1"/>
</dbReference>
<dbReference type="Gene3D" id="2.170.270.10">
    <property type="entry name" value="SET domain"/>
    <property type="match status" value="1"/>
</dbReference>
<dbReference type="InterPro" id="IPR044417">
    <property type="entry name" value="PRDM7_9_PR-SET"/>
</dbReference>
<dbReference type="InterPro" id="IPR001214">
    <property type="entry name" value="SET_dom"/>
</dbReference>
<dbReference type="InterPro" id="IPR046341">
    <property type="entry name" value="SET_dom_sf"/>
</dbReference>
<dbReference type="InterPro" id="IPR052296">
    <property type="entry name" value="TR-Histone_Methyltrans"/>
</dbReference>
<dbReference type="PANTHER" id="PTHR16516">
    <property type="entry name" value="AGAP007109-PA"/>
    <property type="match status" value="1"/>
</dbReference>
<dbReference type="PANTHER" id="PTHR16516:SF4">
    <property type="entry name" value="C2H2-TYPE DOMAIN-CONTAINING PROTEIN"/>
    <property type="match status" value="1"/>
</dbReference>
<dbReference type="Pfam" id="PF21549">
    <property type="entry name" value="PRDM2_PR"/>
    <property type="match status" value="1"/>
</dbReference>
<dbReference type="SMART" id="SM00317">
    <property type="entry name" value="SET"/>
    <property type="match status" value="1"/>
</dbReference>
<dbReference type="SUPFAM" id="SSF82199">
    <property type="entry name" value="SET domain"/>
    <property type="match status" value="1"/>
</dbReference>
<dbReference type="PROSITE" id="PS50280">
    <property type="entry name" value="SET"/>
    <property type="match status" value="1"/>
</dbReference>
<feature type="chain" id="PRO_0000449791" description="Histone-lysine N-methyltransferase set-17">
    <location>
        <begin position="1"/>
        <end position="277"/>
    </location>
</feature>
<feature type="domain" description="SET" evidence="1">
    <location>
        <begin position="135"/>
        <end position="246"/>
    </location>
</feature>
<feature type="binding site" evidence="1">
    <location>
        <position position="245"/>
    </location>
    <ligand>
        <name>S-adenosyl-L-methionine</name>
        <dbReference type="ChEBI" id="CHEBI:59789"/>
    </ligand>
</feature>
<feature type="splice variant" id="VSP_060571" description="In isoform b." evidence="4">
    <location>
        <begin position="1"/>
        <end position="12"/>
    </location>
</feature>
<feature type="mutagenesis site" description="In n5017; Reduces the number of eggs laid. In males, there is a 50% reduction in the number of spermatids per spermatheca which reduces male fertility. Reduces the transcription of major sperm proteins and the number of fibrous-body membranous organelles in the cytoplasm of spermatocytes. Reduces the methylation of 'Lys-4' of histone H3." evidence="2 3">
    <location>
        <begin position="1"/>
        <end position="135"/>
    </location>
</feature>
<feature type="mutagenesis site" description="In gk417488; reduces fertility." evidence="3">
    <location>
        <begin position="84"/>
        <end position="277"/>
    </location>
</feature>
<comment type="function">
    <text evidence="2 3">Histone methyltransferase that specifically mono- and di-methylates 'Lys-4' of histone H3 in vitro (PubMed:24685137). Does not tri-methylate 'Lys-4' of histone H3 in vitro (PubMed:24685137). Promotes spermatid development and fertility by positively regulating the transcription of spermatocyte-specific genes in primary spermatocytes (PubMed:29702639). Together with spr-5, required for transgenerational fertility (PubMed:24685137).</text>
</comment>
<comment type="catalytic activity">
    <reaction evidence="2">
        <text>N(6)-methyl-L-lysyl(4)-[histone H3] + S-adenosyl-L-methionine = N(6),N(6)-dimethyl-L-lysyl(4)-[histone H3] + S-adenosyl-L-homocysteine + H(+)</text>
        <dbReference type="Rhea" id="RHEA:60268"/>
        <dbReference type="Rhea" id="RHEA-COMP:15540"/>
        <dbReference type="Rhea" id="RHEA-COMP:15543"/>
        <dbReference type="ChEBI" id="CHEBI:15378"/>
        <dbReference type="ChEBI" id="CHEBI:57856"/>
        <dbReference type="ChEBI" id="CHEBI:59789"/>
        <dbReference type="ChEBI" id="CHEBI:61929"/>
        <dbReference type="ChEBI" id="CHEBI:61976"/>
    </reaction>
</comment>
<comment type="catalytic activity">
    <reaction evidence="2">
        <text>L-lysyl(4)-[histone H3] + S-adenosyl-L-methionine = N(6)-methyl-L-lysyl(4)-[histone H3] + S-adenosyl-L-homocysteine + H(+)</text>
        <dbReference type="Rhea" id="RHEA:60264"/>
        <dbReference type="Rhea" id="RHEA-COMP:15543"/>
        <dbReference type="Rhea" id="RHEA-COMP:15547"/>
        <dbReference type="ChEBI" id="CHEBI:15378"/>
        <dbReference type="ChEBI" id="CHEBI:29969"/>
        <dbReference type="ChEBI" id="CHEBI:57856"/>
        <dbReference type="ChEBI" id="CHEBI:59789"/>
        <dbReference type="ChEBI" id="CHEBI:61929"/>
        <dbReference type="EC" id="2.1.1.364"/>
    </reaction>
</comment>
<comment type="subcellular location">
    <subcellularLocation>
        <location evidence="3">Nucleus</location>
    </subcellularLocation>
    <text evidence="3">In males and hermaphrodites, localizes to foci in the nucleus of spermatocytes, which express the mono- and di-methyl states of 'Lys-4' of histone H3 (PubMed:29702639). These foci are stable nuclear structures with slow diffusion and liquid-like properties (PubMed:29702639). In turn, these foci co-localize with the transcription start sites for major sperm proteins (PubMed:29702639).</text>
</comment>
<comment type="alternative products">
    <event type="alternative splicing"/>
    <isoform>
        <id>A0A163UT06-1</id>
        <name evidence="6">a</name>
        <sequence type="displayed"/>
    </isoform>
    <isoform>
        <id>A0A163UT06-2</id>
        <name evidence="7">b</name>
        <sequence type="described" ref="VSP_060571"/>
    </isoform>
</comment>
<comment type="tissue specificity">
    <text evidence="3">Expressed in the germline (PubMed:29702639). Predominantly expressed in primary spermatocytes (PubMed:29702639). Also expressed in the oocyte-producing germline of hermaphrodites (PubMed:29702639).</text>
</comment>
<comment type="developmental stage">
    <text evidence="3">Broadly expressed in tissues at the L1 larval stage (PubMed:29702639). In the male germline, first expressed in primary spermatocytes at the L4 larval stage and expression increases as spermatocyte differentiation progresses (PubMed:29702639).</text>
</comment>
<comment type="disruption phenotype">
    <text evidence="2">RNAi-mediated knockdown partially suppresses the sterility of spr-5 mutants (by101) and results in a slightly increased number of eggs laid as compared to the spr-5 single mutant.</text>
</comment>
<comment type="similarity">
    <text evidence="1">Belongs to the class V-like SAM-binding methyltransferase superfamily.</text>
</comment>
<sequence>MNIKHNYISYFQMNGIQIPGISNPEAIIPITGEKKSYKLVLDFNDGAISIIEARYLDSKLHREIQDLSDNDVTILGTEISDGAYDENLDIHCDKCNKFYRPYCRLHPLFKIPDRVLKRDESSNLSFSQQTLPILFRIEESKLPNAGLGVIAEVFIPVGMVFGPYKGRRCQKKTDFYKDGYAWLIKSGDKRFYIDGSDAERSNWLRYINSPRFEDEQNMLAFQTNGKIFYRVIKPIRINQELLVWYGSSYGNEFVESENGNKYKKPAKNPFICVGAQR</sequence>